<reference key="1">
    <citation type="journal article" date="1996" name="Eur. J. Biochem.">
        <title>Three alpha-galactosidase genes of Trichoderma reesei cloned by expression in yeast.</title>
        <authorList>
            <person name="Margolles-Clark E."/>
            <person name="Tenkanen M."/>
            <person name="Luonteri E."/>
            <person name="Penttila M."/>
        </authorList>
    </citation>
    <scope>NUCLEOTIDE SEQUENCE [MRNA]</scope>
    <scope>FUNCTION</scope>
    <scope>BIOPHYSICOCHEMICAL PROPERTIES</scope>
    <source>
        <strain>ATCC 56765 / Rut C-30</strain>
    </source>
</reference>
<organism>
    <name type="scientific">Hypocrea jecorina</name>
    <name type="common">Trichoderma reesei</name>
    <dbReference type="NCBI Taxonomy" id="51453"/>
    <lineage>
        <taxon>Eukaryota</taxon>
        <taxon>Fungi</taxon>
        <taxon>Dikarya</taxon>
        <taxon>Ascomycota</taxon>
        <taxon>Pezizomycotina</taxon>
        <taxon>Sordariomycetes</taxon>
        <taxon>Hypocreomycetidae</taxon>
        <taxon>Hypocreales</taxon>
        <taxon>Hypocreaceae</taxon>
        <taxon>Trichoderma</taxon>
    </lineage>
</organism>
<proteinExistence type="evidence at protein level"/>
<dbReference type="EC" id="3.2.1.22"/>
<dbReference type="EMBL" id="Z69254">
    <property type="protein sequence ID" value="CAA93245.1"/>
    <property type="molecule type" value="mRNA"/>
</dbReference>
<dbReference type="PIR" id="S74219">
    <property type="entry name" value="S74219"/>
</dbReference>
<dbReference type="SMR" id="Q92457"/>
<dbReference type="CAZy" id="GH36">
    <property type="family name" value="Glycoside Hydrolase Family 36"/>
</dbReference>
<dbReference type="GlyCosmos" id="Q92457">
    <property type="glycosylation" value="9 sites, No reported glycans"/>
</dbReference>
<dbReference type="GO" id="GO:0005576">
    <property type="term" value="C:extracellular region"/>
    <property type="evidence" value="ECO:0007669"/>
    <property type="project" value="UniProtKB-SubCell"/>
</dbReference>
<dbReference type="GO" id="GO:0004557">
    <property type="term" value="F:alpha-galactosidase activity"/>
    <property type="evidence" value="ECO:0000314"/>
    <property type="project" value="UniProtKB"/>
</dbReference>
<dbReference type="GO" id="GO:0016052">
    <property type="term" value="P:carbohydrate catabolic process"/>
    <property type="evidence" value="ECO:0007669"/>
    <property type="project" value="InterPro"/>
</dbReference>
<dbReference type="CDD" id="cd14791">
    <property type="entry name" value="GH36"/>
    <property type="match status" value="1"/>
</dbReference>
<dbReference type="FunFam" id="2.60.40.1180:FF:000028">
    <property type="entry name" value="Alpha-galactosidase"/>
    <property type="match status" value="1"/>
</dbReference>
<dbReference type="FunFam" id="2.70.98.60:FF:000001">
    <property type="entry name" value="Alpha-galactosidase"/>
    <property type="match status" value="1"/>
</dbReference>
<dbReference type="FunFam" id="3.20.20.70:FF:000118">
    <property type="entry name" value="Alpha-galactosidase"/>
    <property type="match status" value="1"/>
</dbReference>
<dbReference type="Gene3D" id="3.20.20.70">
    <property type="entry name" value="Aldolase class I"/>
    <property type="match status" value="1"/>
</dbReference>
<dbReference type="Gene3D" id="2.70.98.60">
    <property type="entry name" value="alpha-galactosidase from lactobacil brevis"/>
    <property type="match status" value="1"/>
</dbReference>
<dbReference type="Gene3D" id="2.60.40.1180">
    <property type="entry name" value="Golgi alpha-mannosidase II"/>
    <property type="match status" value="1"/>
</dbReference>
<dbReference type="InterPro" id="IPR013785">
    <property type="entry name" value="Aldolase_TIM"/>
</dbReference>
<dbReference type="InterPro" id="IPR038417">
    <property type="entry name" value="Alpga-gal_N_sf"/>
</dbReference>
<dbReference type="InterPro" id="IPR050985">
    <property type="entry name" value="Alpha-glycosidase_related"/>
</dbReference>
<dbReference type="InterPro" id="IPR000111">
    <property type="entry name" value="Glyco_hydro_27/36_CS"/>
</dbReference>
<dbReference type="InterPro" id="IPR002252">
    <property type="entry name" value="Glyco_hydro_36"/>
</dbReference>
<dbReference type="InterPro" id="IPR031705">
    <property type="entry name" value="Glyco_hydro_36_C"/>
</dbReference>
<dbReference type="InterPro" id="IPR031704">
    <property type="entry name" value="Glyco_hydro_36_N"/>
</dbReference>
<dbReference type="InterPro" id="IPR013780">
    <property type="entry name" value="Glyco_hydro_b"/>
</dbReference>
<dbReference type="InterPro" id="IPR017853">
    <property type="entry name" value="Glycoside_hydrolase_SF"/>
</dbReference>
<dbReference type="PANTHER" id="PTHR43053:SF3">
    <property type="entry name" value="ALPHA-GALACTOSIDASE C-RELATED"/>
    <property type="match status" value="1"/>
</dbReference>
<dbReference type="PANTHER" id="PTHR43053">
    <property type="entry name" value="GLYCOSIDASE FAMILY 31"/>
    <property type="match status" value="1"/>
</dbReference>
<dbReference type="Pfam" id="PF16874">
    <property type="entry name" value="Glyco_hydro_36C"/>
    <property type="match status" value="1"/>
</dbReference>
<dbReference type="Pfam" id="PF16875">
    <property type="entry name" value="Glyco_hydro_36N"/>
    <property type="match status" value="1"/>
</dbReference>
<dbReference type="Pfam" id="PF02065">
    <property type="entry name" value="Melibiase"/>
    <property type="match status" value="1"/>
</dbReference>
<dbReference type="PIRSF" id="PIRSF005536">
    <property type="entry name" value="Agal"/>
    <property type="match status" value="1"/>
</dbReference>
<dbReference type="PRINTS" id="PR00743">
    <property type="entry name" value="GLHYDRLASE36"/>
</dbReference>
<dbReference type="SUPFAM" id="SSF51445">
    <property type="entry name" value="(Trans)glycosidases"/>
    <property type="match status" value="1"/>
</dbReference>
<dbReference type="PROSITE" id="PS00512">
    <property type="entry name" value="ALPHA_GALACTOSIDASE"/>
    <property type="match status" value="1"/>
</dbReference>
<comment type="function">
    <text evidence="3">Alpha-galactosidase involved in the degradation of simple oligosaccharides like melibiose, raffinose and stachyose, and of polymeric galacto(gluco)mannans.</text>
</comment>
<comment type="catalytic activity">
    <reaction>
        <text>Hydrolysis of terminal, non-reducing alpha-D-galactose residues in alpha-D-galactosides, including galactose oligosaccharides, galactomannans and galactolipids.</text>
        <dbReference type="EC" id="3.2.1.22"/>
    </reaction>
</comment>
<comment type="biophysicochemical properties">
    <phDependence>
        <text evidence="3">Optimum pH is 3.5-4.5.</text>
    </phDependence>
</comment>
<comment type="subcellular location">
    <subcellularLocation>
        <location evidence="4">Secreted</location>
    </subcellularLocation>
</comment>
<comment type="similarity">
    <text evidence="4">Belongs to the glycosyl hydrolase 27 family.</text>
</comment>
<feature type="signal peptide" evidence="2">
    <location>
        <begin position="1"/>
        <end position="26"/>
    </location>
</feature>
<feature type="chain" id="PRO_5000147668" description="Alpha-galactosidase 2">
    <location>
        <begin position="27"/>
        <end position="746"/>
    </location>
</feature>
<feature type="active site" description="Nucleophile" evidence="1">
    <location>
        <position position="504"/>
    </location>
</feature>
<feature type="active site" description="Proton donor" evidence="1">
    <location>
        <position position="566"/>
    </location>
</feature>
<feature type="glycosylation site" description="N-linked (GlcNAc...) asparagine" evidence="2">
    <location>
        <position position="43"/>
    </location>
</feature>
<feature type="glycosylation site" description="N-linked (GlcNAc...) asparagine" evidence="2">
    <location>
        <position position="156"/>
    </location>
</feature>
<feature type="glycosylation site" description="N-linked (GlcNAc...) asparagine" evidence="2">
    <location>
        <position position="180"/>
    </location>
</feature>
<feature type="glycosylation site" description="N-linked (GlcNAc...) asparagine" evidence="2">
    <location>
        <position position="188"/>
    </location>
</feature>
<feature type="glycosylation site" description="N-linked (GlcNAc...) asparagine" evidence="2">
    <location>
        <position position="360"/>
    </location>
</feature>
<feature type="glycosylation site" description="N-linked (GlcNAc...) asparagine" evidence="2">
    <location>
        <position position="427"/>
    </location>
</feature>
<feature type="glycosylation site" description="N-linked (GlcNAc...) asparagine" evidence="2">
    <location>
        <position position="446"/>
    </location>
</feature>
<feature type="glycosylation site" description="N-linked (GlcNAc...) asparagine" evidence="2">
    <location>
        <position position="495"/>
    </location>
</feature>
<feature type="glycosylation site" description="N-linked (GlcNAc...) asparagine" evidence="2">
    <location>
        <position position="714"/>
    </location>
</feature>
<keyword id="KW-0325">Glycoprotein</keyword>
<keyword id="KW-0326">Glycosidase</keyword>
<keyword id="KW-0378">Hydrolase</keyword>
<keyword id="KW-0964">Secreted</keyword>
<keyword id="KW-0732">Signal</keyword>
<protein>
    <recommendedName>
        <fullName>Alpha-galactosidase 2</fullName>
        <ecNumber>3.2.1.22</ecNumber>
    </recommendedName>
    <alternativeName>
        <fullName>Alpha-D-galactoside galactohydrolase 2</fullName>
    </alternativeName>
    <alternativeName>
        <fullName>Melibiase 2</fullName>
    </alternativeName>
</protein>
<gene>
    <name type="primary">agl2</name>
</gene>
<sequence>MLGAPSPRRLADVLAVTAGLVASVRAASPISVSGKSFALNGDNVSYRFHVDDDSKDLIGDHFGGPATEDGVFPPIIGPIQGWVDLIGRQRREFPDLGRGDFRTPAVHIRQAAGYTVSDFQYKSHRVVEGKPALRGLPSTFGDAGDVSTLVVHMYDNYSSVAADLTYSIFPKYDAIVRSVNITNMGKGNITIEKLASLSVDLPYEDFDMLELKGDWAREGKRLRRKVDYGSQGFGSTTGYSSHLHNPFFSLITPTTTESQGEAWGFSLVYTGSFSVEVEKGSQGLTRAAIGVNPYQLSWPLGPGETFSSPEAVAVFSTTGVGGMSRKFHNLYRKHLIKSKFATQMHPVLLNSWEGLGFDYNDTTILHLAQESADLGIKLFVLDDGWFGVKHPRVSDNAGLGDWEANPKRFPQGLPDFISDVTKLKVANSSDHLQFGLWFEPEMVNPNSTLYMEHPDWAIHAGSYPRTLTRNQLVLNVALPEVQDFIIESLSNILSNASISYVKWDNNRGIHEAPYPGLDYAYMLGLYRVFDTLSSKFPNVRWEGCASGGGRFDPGVLQYFPHIWTSDDTDAVERIAIQFGTSLVYPPSAMGAHVSAVPNGQTQRTTSIAFRAHVAMMGGSFGFELTPAEMPEDDKAQIPGIIALAEKVNPIVVKGDMWRLSLPEESNWPAALFISQDGSQAVLFYFQIRANINNAWPVLRLQGLDASAKYKIDGNQTFSGATLMNIGLQYQFNGDYDSKVVFLEKQT</sequence>
<evidence type="ECO:0000250" key="1">
    <source>
        <dbReference type="UniProtKB" id="Q9ALJ4"/>
    </source>
</evidence>
<evidence type="ECO:0000255" key="2"/>
<evidence type="ECO:0000269" key="3">
    <source>
    </source>
</evidence>
<evidence type="ECO:0000305" key="4"/>
<accession>Q92457</accession>
<name>AGAL2_HYPJE</name>